<gene>
    <name evidence="1" type="primary">rpmI</name>
    <name type="ordered locus">Dole_3042</name>
</gene>
<evidence type="ECO:0000255" key="1">
    <source>
        <dbReference type="HAMAP-Rule" id="MF_00514"/>
    </source>
</evidence>
<evidence type="ECO:0000256" key="2">
    <source>
        <dbReference type="SAM" id="MobiDB-lite"/>
    </source>
</evidence>
<evidence type="ECO:0000305" key="3"/>
<sequence length="65" mass="7637">MQKIKTNRSAAKRFKRTKSGKFVYSKSHGSHILTKKNRKRKRSLRKSHILDSSNNKELKRLLPGM</sequence>
<keyword id="KW-1185">Reference proteome</keyword>
<keyword id="KW-0687">Ribonucleoprotein</keyword>
<keyword id="KW-0689">Ribosomal protein</keyword>
<feature type="chain" id="PRO_1000127339" description="Large ribosomal subunit protein bL35">
    <location>
        <begin position="1"/>
        <end position="65"/>
    </location>
</feature>
<feature type="region of interest" description="Disordered" evidence="2">
    <location>
        <begin position="1"/>
        <end position="65"/>
    </location>
</feature>
<feature type="compositionally biased region" description="Basic residues" evidence="2">
    <location>
        <begin position="10"/>
        <end position="19"/>
    </location>
</feature>
<feature type="compositionally biased region" description="Basic residues" evidence="2">
    <location>
        <begin position="33"/>
        <end position="47"/>
    </location>
</feature>
<feature type="compositionally biased region" description="Basic and acidic residues" evidence="2">
    <location>
        <begin position="54"/>
        <end position="65"/>
    </location>
</feature>
<reference key="1">
    <citation type="submission" date="2007-10" db="EMBL/GenBank/DDBJ databases">
        <title>Complete sequence of Desulfococcus oleovorans Hxd3.</title>
        <authorList>
            <consortium name="US DOE Joint Genome Institute"/>
            <person name="Copeland A."/>
            <person name="Lucas S."/>
            <person name="Lapidus A."/>
            <person name="Barry K."/>
            <person name="Glavina del Rio T."/>
            <person name="Dalin E."/>
            <person name="Tice H."/>
            <person name="Pitluck S."/>
            <person name="Kiss H."/>
            <person name="Brettin T."/>
            <person name="Bruce D."/>
            <person name="Detter J.C."/>
            <person name="Han C."/>
            <person name="Schmutz J."/>
            <person name="Larimer F."/>
            <person name="Land M."/>
            <person name="Hauser L."/>
            <person name="Kyrpides N."/>
            <person name="Kim E."/>
            <person name="Wawrik B."/>
            <person name="Richardson P."/>
        </authorList>
    </citation>
    <scope>NUCLEOTIDE SEQUENCE [LARGE SCALE GENOMIC DNA]</scope>
    <source>
        <strain>DSM 6200 / JCM 39069 / Hxd3</strain>
    </source>
</reference>
<accession>A8ZZ72</accession>
<dbReference type="EMBL" id="CP000859">
    <property type="protein sequence ID" value="ABW68845.1"/>
    <property type="molecule type" value="Genomic_DNA"/>
</dbReference>
<dbReference type="RefSeq" id="WP_012176456.1">
    <property type="nucleotide sequence ID" value="NC_009943.1"/>
</dbReference>
<dbReference type="SMR" id="A8ZZ72"/>
<dbReference type="STRING" id="96561.Dole_3042"/>
<dbReference type="KEGG" id="dol:Dole_3042"/>
<dbReference type="eggNOG" id="COG0291">
    <property type="taxonomic scope" value="Bacteria"/>
</dbReference>
<dbReference type="HOGENOM" id="CLU_169643_1_1_7"/>
<dbReference type="OrthoDB" id="9804851at2"/>
<dbReference type="Proteomes" id="UP000008561">
    <property type="component" value="Chromosome"/>
</dbReference>
<dbReference type="GO" id="GO:0015934">
    <property type="term" value="C:large ribosomal subunit"/>
    <property type="evidence" value="ECO:0007669"/>
    <property type="project" value="TreeGrafter"/>
</dbReference>
<dbReference type="GO" id="GO:0003735">
    <property type="term" value="F:structural constituent of ribosome"/>
    <property type="evidence" value="ECO:0007669"/>
    <property type="project" value="InterPro"/>
</dbReference>
<dbReference type="GO" id="GO:0006412">
    <property type="term" value="P:translation"/>
    <property type="evidence" value="ECO:0007669"/>
    <property type="project" value="UniProtKB-UniRule"/>
</dbReference>
<dbReference type="FunFam" id="4.10.410.60:FF:000001">
    <property type="entry name" value="50S ribosomal protein L35"/>
    <property type="match status" value="1"/>
</dbReference>
<dbReference type="Gene3D" id="4.10.410.60">
    <property type="match status" value="1"/>
</dbReference>
<dbReference type="HAMAP" id="MF_00514">
    <property type="entry name" value="Ribosomal_bL35"/>
    <property type="match status" value="1"/>
</dbReference>
<dbReference type="InterPro" id="IPR001706">
    <property type="entry name" value="Ribosomal_bL35"/>
</dbReference>
<dbReference type="InterPro" id="IPR021137">
    <property type="entry name" value="Ribosomal_bL35-like"/>
</dbReference>
<dbReference type="InterPro" id="IPR018265">
    <property type="entry name" value="Ribosomal_bL35_CS"/>
</dbReference>
<dbReference type="InterPro" id="IPR037229">
    <property type="entry name" value="Ribosomal_bL35_sf"/>
</dbReference>
<dbReference type="NCBIfam" id="TIGR00001">
    <property type="entry name" value="rpmI_bact"/>
    <property type="match status" value="1"/>
</dbReference>
<dbReference type="PANTHER" id="PTHR33343">
    <property type="entry name" value="54S RIBOSOMAL PROTEIN BL35M"/>
    <property type="match status" value="1"/>
</dbReference>
<dbReference type="PANTHER" id="PTHR33343:SF1">
    <property type="entry name" value="LARGE RIBOSOMAL SUBUNIT PROTEIN BL35M"/>
    <property type="match status" value="1"/>
</dbReference>
<dbReference type="Pfam" id="PF01632">
    <property type="entry name" value="Ribosomal_L35p"/>
    <property type="match status" value="1"/>
</dbReference>
<dbReference type="PRINTS" id="PR00064">
    <property type="entry name" value="RIBOSOMALL35"/>
</dbReference>
<dbReference type="SUPFAM" id="SSF143034">
    <property type="entry name" value="L35p-like"/>
    <property type="match status" value="1"/>
</dbReference>
<dbReference type="PROSITE" id="PS00936">
    <property type="entry name" value="RIBOSOMAL_L35"/>
    <property type="match status" value="1"/>
</dbReference>
<proteinExistence type="inferred from homology"/>
<protein>
    <recommendedName>
        <fullName evidence="1">Large ribosomal subunit protein bL35</fullName>
    </recommendedName>
    <alternativeName>
        <fullName evidence="3">50S ribosomal protein L35</fullName>
    </alternativeName>
</protein>
<organism>
    <name type="scientific">Desulfosudis oleivorans (strain DSM 6200 / JCM 39069 / Hxd3)</name>
    <name type="common">Desulfococcus oleovorans</name>
    <dbReference type="NCBI Taxonomy" id="96561"/>
    <lineage>
        <taxon>Bacteria</taxon>
        <taxon>Pseudomonadati</taxon>
        <taxon>Thermodesulfobacteriota</taxon>
        <taxon>Desulfobacteria</taxon>
        <taxon>Desulfobacterales</taxon>
        <taxon>Desulfosudaceae</taxon>
        <taxon>Desulfosudis</taxon>
    </lineage>
</organism>
<name>RL35_DESOH</name>
<comment type="similarity">
    <text evidence="1">Belongs to the bacterial ribosomal protein bL35 family.</text>
</comment>